<evidence type="ECO:0000255" key="1">
    <source>
        <dbReference type="HAMAP-Rule" id="MF_01660"/>
    </source>
</evidence>
<feature type="chain" id="PRO_0000341917" description="2-succinyl-6-hydroxy-2,4-cyclohexadiene-1-carboxylate synthase">
    <location>
        <begin position="1"/>
        <end position="252"/>
    </location>
</feature>
<gene>
    <name evidence="1" type="primary">menH</name>
    <name type="ordered locus">SARI_00591</name>
</gene>
<protein>
    <recommendedName>
        <fullName evidence="1">2-succinyl-6-hydroxy-2,4-cyclohexadiene-1-carboxylate synthase</fullName>
        <shortName evidence="1">SHCHC synthase</shortName>
        <ecNumber evidence="1">4.2.99.20</ecNumber>
    </recommendedName>
</protein>
<dbReference type="EC" id="4.2.99.20" evidence="1"/>
<dbReference type="EMBL" id="CP000880">
    <property type="protein sequence ID" value="ABX20517.1"/>
    <property type="molecule type" value="Genomic_DNA"/>
</dbReference>
<dbReference type="SMR" id="A9MJB7"/>
<dbReference type="STRING" id="41514.SARI_00591"/>
<dbReference type="ESTHER" id="salty-YFBB">
    <property type="family name" value="MenH_SHCHC"/>
</dbReference>
<dbReference type="KEGG" id="ses:SARI_00591"/>
<dbReference type="HOGENOM" id="CLU_020336_38_2_6"/>
<dbReference type="UniPathway" id="UPA00079"/>
<dbReference type="UniPathway" id="UPA01057">
    <property type="reaction ID" value="UER00900"/>
</dbReference>
<dbReference type="Proteomes" id="UP000002084">
    <property type="component" value="Chromosome"/>
</dbReference>
<dbReference type="GO" id="GO:0070205">
    <property type="term" value="F:2-succinyl-6-hydroxy-2,4-cyclohexadiene-1-carboxylate synthase activity"/>
    <property type="evidence" value="ECO:0007669"/>
    <property type="project" value="UniProtKB-UniRule"/>
</dbReference>
<dbReference type="GO" id="GO:0009234">
    <property type="term" value="P:menaquinone biosynthetic process"/>
    <property type="evidence" value="ECO:0007669"/>
    <property type="project" value="UniProtKB-UniRule"/>
</dbReference>
<dbReference type="Gene3D" id="3.40.50.1820">
    <property type="entry name" value="alpha/beta hydrolase"/>
    <property type="match status" value="1"/>
</dbReference>
<dbReference type="HAMAP" id="MF_01660">
    <property type="entry name" value="MenH"/>
    <property type="match status" value="1"/>
</dbReference>
<dbReference type="InterPro" id="IPR000073">
    <property type="entry name" value="AB_hydrolase_1"/>
</dbReference>
<dbReference type="InterPro" id="IPR029058">
    <property type="entry name" value="AB_hydrolase_fold"/>
</dbReference>
<dbReference type="InterPro" id="IPR022485">
    <property type="entry name" value="SHCHC_synthase_MenH"/>
</dbReference>
<dbReference type="NCBIfam" id="TIGR03695">
    <property type="entry name" value="menH_SHCHC"/>
    <property type="match status" value="1"/>
</dbReference>
<dbReference type="NCBIfam" id="NF008340">
    <property type="entry name" value="PRK11126.1"/>
    <property type="match status" value="1"/>
</dbReference>
<dbReference type="PANTHER" id="PTHR42916">
    <property type="entry name" value="2-SUCCINYL-5-ENOLPYRUVYL-6-HYDROXY-3-CYCLOHEXENE-1-CARBOXYLATE SYNTHASE"/>
    <property type="match status" value="1"/>
</dbReference>
<dbReference type="PANTHER" id="PTHR42916:SF1">
    <property type="entry name" value="PROTEIN PHYLLO, CHLOROPLASTIC"/>
    <property type="match status" value="1"/>
</dbReference>
<dbReference type="Pfam" id="PF12697">
    <property type="entry name" value="Abhydrolase_6"/>
    <property type="match status" value="1"/>
</dbReference>
<dbReference type="SUPFAM" id="SSF53474">
    <property type="entry name" value="alpha/beta-Hydrolases"/>
    <property type="match status" value="1"/>
</dbReference>
<accession>A9MJB7</accession>
<proteinExistence type="inferred from homology"/>
<sequence length="252" mass="27798">MMLHAQNMPGQSGMPWLVFLHGFSGDCREWQPVGEQFHTCSRLYIDLPGHGGSAAIPVGGFADVFQLLRATLISYNILKFWLVGYSLGGRVAMMAACQGIPGLCGLVVEGGHPGLQNEQARAERRLSDGRWAERFRREPLSTVFHDWYQQSVFTSLTAQQRQALTALRSQNNGETLAAMLEATSLAAQPDLREALNALTFPFYYLCGERDSKFRALAQEVAATCHVIRNAGHNAHRENPAGVVDSLAQILRL</sequence>
<keyword id="KW-0456">Lyase</keyword>
<keyword id="KW-0474">Menaquinone biosynthesis</keyword>
<keyword id="KW-1185">Reference proteome</keyword>
<name>MENH_SALAR</name>
<comment type="function">
    <text evidence="1">Catalyzes a proton abstraction reaction that results in 2,5-elimination of pyruvate from 2-succinyl-5-enolpyruvyl-6-hydroxy-3-cyclohexene-1-carboxylate (SEPHCHC) and the formation of 2-succinyl-6-hydroxy-2,4-cyclohexadiene-1-carboxylate (SHCHC).</text>
</comment>
<comment type="catalytic activity">
    <reaction evidence="1">
        <text>5-enolpyruvoyl-6-hydroxy-2-succinyl-cyclohex-3-ene-1-carboxylate = (1R,6R)-6-hydroxy-2-succinyl-cyclohexa-2,4-diene-1-carboxylate + pyruvate</text>
        <dbReference type="Rhea" id="RHEA:25597"/>
        <dbReference type="ChEBI" id="CHEBI:15361"/>
        <dbReference type="ChEBI" id="CHEBI:58689"/>
        <dbReference type="ChEBI" id="CHEBI:58818"/>
        <dbReference type="EC" id="4.2.99.20"/>
    </reaction>
</comment>
<comment type="pathway">
    <text evidence="1">Quinol/quinone metabolism; 1,4-dihydroxy-2-naphthoate biosynthesis; 1,4-dihydroxy-2-naphthoate from chorismate: step 3/7.</text>
</comment>
<comment type="pathway">
    <text evidence="1">Quinol/quinone metabolism; menaquinone biosynthesis.</text>
</comment>
<comment type="subunit">
    <text evidence="1">Monomer.</text>
</comment>
<comment type="similarity">
    <text evidence="1">Belongs to the AB hydrolase superfamily. MenH family.</text>
</comment>
<reference key="1">
    <citation type="submission" date="2007-11" db="EMBL/GenBank/DDBJ databases">
        <authorList>
            <consortium name="The Salmonella enterica serovar Arizonae Genome Sequencing Project"/>
            <person name="McClelland M."/>
            <person name="Sanderson E.K."/>
            <person name="Porwollik S."/>
            <person name="Spieth J."/>
            <person name="Clifton W.S."/>
            <person name="Fulton R."/>
            <person name="Chunyan W."/>
            <person name="Wollam A."/>
            <person name="Shah N."/>
            <person name="Pepin K."/>
            <person name="Bhonagiri V."/>
            <person name="Nash W."/>
            <person name="Johnson M."/>
            <person name="Thiruvilangam P."/>
            <person name="Wilson R."/>
        </authorList>
    </citation>
    <scope>NUCLEOTIDE SEQUENCE [LARGE SCALE GENOMIC DNA]</scope>
    <source>
        <strain>ATCC BAA-731 / CDC346-86 / RSK2980</strain>
    </source>
</reference>
<organism>
    <name type="scientific">Salmonella arizonae (strain ATCC BAA-731 / CDC346-86 / RSK2980)</name>
    <dbReference type="NCBI Taxonomy" id="41514"/>
    <lineage>
        <taxon>Bacteria</taxon>
        <taxon>Pseudomonadati</taxon>
        <taxon>Pseudomonadota</taxon>
        <taxon>Gammaproteobacteria</taxon>
        <taxon>Enterobacterales</taxon>
        <taxon>Enterobacteriaceae</taxon>
        <taxon>Salmonella</taxon>
    </lineage>
</organism>